<organism>
    <name type="scientific">Escherichia coli (strain K12)</name>
    <dbReference type="NCBI Taxonomy" id="83333"/>
    <lineage>
        <taxon>Bacteria</taxon>
        <taxon>Pseudomonadati</taxon>
        <taxon>Pseudomonadota</taxon>
        <taxon>Gammaproteobacteria</taxon>
        <taxon>Enterobacterales</taxon>
        <taxon>Enterobacteriaceae</taxon>
        <taxon>Escherichia</taxon>
    </lineage>
</organism>
<accession>P42601</accession>
<accession>Q2M9B8</accession>
<accession>Q6BF48</accession>
<keyword id="KW-0997">Cell inner membrane</keyword>
<keyword id="KW-1003">Cell membrane</keyword>
<keyword id="KW-0472">Membrane</keyword>
<keyword id="KW-1185">Reference proteome</keyword>
<keyword id="KW-0812">Transmembrane</keyword>
<keyword id="KW-1133">Transmembrane helix</keyword>
<evidence type="ECO:0000255" key="1"/>
<evidence type="ECO:0000269" key="2">
    <source>
    </source>
</evidence>
<evidence type="ECO:0000269" key="3">
    <source>
    </source>
</evidence>
<evidence type="ECO:0000269" key="4">
    <source>
    </source>
</evidence>
<evidence type="ECO:0000303" key="5">
    <source>
    </source>
</evidence>
<evidence type="ECO:0000305" key="6"/>
<evidence type="ECO:0000305" key="7">
    <source>
    </source>
</evidence>
<evidence type="ECO:0000305" key="8">
    <source>
    </source>
</evidence>
<name>ALX_ECOLI</name>
<dbReference type="EMBL" id="U18997">
    <property type="protein sequence ID" value="AAA57890.1"/>
    <property type="molecule type" value="Genomic_DNA"/>
</dbReference>
<dbReference type="EMBL" id="U00096">
    <property type="protein sequence ID" value="AAT48166.1"/>
    <property type="molecule type" value="Genomic_DNA"/>
</dbReference>
<dbReference type="EMBL" id="AP009048">
    <property type="protein sequence ID" value="BAE77138.1"/>
    <property type="molecule type" value="Genomic_DNA"/>
</dbReference>
<dbReference type="PIR" id="E65097">
    <property type="entry name" value="E65097"/>
</dbReference>
<dbReference type="RefSeq" id="WP_001098806.1">
    <property type="nucleotide sequence ID" value="NZ_STEB01000001.1"/>
</dbReference>
<dbReference type="RefSeq" id="YP_026201.1">
    <property type="nucleotide sequence ID" value="NC_000913.3"/>
</dbReference>
<dbReference type="BioGRID" id="4262405">
    <property type="interactions" value="14"/>
</dbReference>
<dbReference type="FunCoup" id="P42601">
    <property type="interactions" value="342"/>
</dbReference>
<dbReference type="STRING" id="511145.b3088"/>
<dbReference type="TCDB" id="2.A.109.1.7">
    <property type="family name" value="the tellurium ion resistance (terc) family"/>
</dbReference>
<dbReference type="PaxDb" id="511145-b3088"/>
<dbReference type="EnsemblBacteria" id="AAT48166">
    <property type="protein sequence ID" value="AAT48166"/>
    <property type="gene ID" value="b3088"/>
</dbReference>
<dbReference type="GeneID" id="947607"/>
<dbReference type="KEGG" id="ecj:JW5515"/>
<dbReference type="KEGG" id="eco:b3088"/>
<dbReference type="KEGG" id="ecoc:C3026_16865"/>
<dbReference type="PATRIC" id="fig|1411691.4.peg.3641"/>
<dbReference type="EchoBASE" id="EB2589"/>
<dbReference type="eggNOG" id="COG0861">
    <property type="taxonomic scope" value="Bacteria"/>
</dbReference>
<dbReference type="HOGENOM" id="CLU_045644_1_2_6"/>
<dbReference type="InParanoid" id="P42601"/>
<dbReference type="OMA" id="ADHAREY"/>
<dbReference type="OrthoDB" id="9783692at2"/>
<dbReference type="PhylomeDB" id="P42601"/>
<dbReference type="BioCyc" id="EcoCyc:G7607-MONOMER"/>
<dbReference type="PRO" id="PR:P42601"/>
<dbReference type="Proteomes" id="UP000000625">
    <property type="component" value="Chromosome"/>
</dbReference>
<dbReference type="GO" id="GO:0005886">
    <property type="term" value="C:plasma membrane"/>
    <property type="evidence" value="ECO:0000314"/>
    <property type="project" value="EcoCyc"/>
</dbReference>
<dbReference type="GO" id="GO:0071467">
    <property type="term" value="P:cellular response to pH"/>
    <property type="evidence" value="ECO:0000314"/>
    <property type="project" value="EcoCyc"/>
</dbReference>
<dbReference type="InterPro" id="IPR005496">
    <property type="entry name" value="Integral_membrane_TerC"/>
</dbReference>
<dbReference type="InterPro" id="IPR022369">
    <property type="entry name" value="Integral_membrane_TerC_rswitch"/>
</dbReference>
<dbReference type="NCBIfam" id="TIGR03718">
    <property type="entry name" value="R_switched_Alx"/>
    <property type="match status" value="1"/>
</dbReference>
<dbReference type="PANTHER" id="PTHR30238">
    <property type="entry name" value="MEMBRANE BOUND PREDICTED REDOX MODULATOR"/>
    <property type="match status" value="1"/>
</dbReference>
<dbReference type="PANTHER" id="PTHR30238:SF0">
    <property type="entry name" value="THYLAKOID MEMBRANE PROTEIN TERC, CHLOROPLASTIC"/>
    <property type="match status" value="1"/>
</dbReference>
<dbReference type="Pfam" id="PF03741">
    <property type="entry name" value="TerC"/>
    <property type="match status" value="1"/>
</dbReference>
<gene>
    <name evidence="5" type="primary">alx</name>
    <name type="synonym">ygjT</name>
    <name type="ordered locus">b3088</name>
    <name type="ordered locus">JW5515</name>
</gene>
<comment type="function">
    <text evidence="7">Has been proposed to be a redox modulator.</text>
</comment>
<comment type="subcellular location">
    <subcellularLocation>
        <location evidence="3">Cell inner membrane</location>
        <topology evidence="8">Multi-pass membrane protein</topology>
    </subcellularLocation>
</comment>
<comment type="induction">
    <text evidence="2 4">By extreme alkaline conditions.</text>
</comment>
<comment type="similarity">
    <text evidence="6">Belongs to the TerC family.</text>
</comment>
<protein>
    <recommendedName>
        <fullName>Putative membrane-bound redox modulator Alx</fullName>
    </recommendedName>
</protein>
<reference key="1">
    <citation type="journal article" date="1997" name="Science">
        <title>The complete genome sequence of Escherichia coli K-12.</title>
        <authorList>
            <person name="Blattner F.R."/>
            <person name="Plunkett G. III"/>
            <person name="Bloch C.A."/>
            <person name="Perna N.T."/>
            <person name="Burland V."/>
            <person name="Riley M."/>
            <person name="Collado-Vides J."/>
            <person name="Glasner J.D."/>
            <person name="Rode C.K."/>
            <person name="Mayhew G.F."/>
            <person name="Gregor J."/>
            <person name="Davis N.W."/>
            <person name="Kirkpatrick H.A."/>
            <person name="Goeden M.A."/>
            <person name="Rose D.J."/>
            <person name="Mau B."/>
            <person name="Shao Y."/>
        </authorList>
    </citation>
    <scope>NUCLEOTIDE SEQUENCE [LARGE SCALE GENOMIC DNA]</scope>
    <source>
        <strain>K12 / MG1655 / ATCC 47076</strain>
    </source>
</reference>
<reference key="2">
    <citation type="journal article" date="2006" name="Nucleic Acids Res.">
        <title>Escherichia coli K-12: a cooperatively developed annotation snapshot -- 2005.</title>
        <authorList>
            <person name="Riley M."/>
            <person name="Abe T."/>
            <person name="Arnaud M.B."/>
            <person name="Berlyn M.K.B."/>
            <person name="Blattner F.R."/>
            <person name="Chaudhuri R.R."/>
            <person name="Glasner J.D."/>
            <person name="Horiuchi T."/>
            <person name="Keseler I.M."/>
            <person name="Kosuge T."/>
            <person name="Mori H."/>
            <person name="Perna N.T."/>
            <person name="Plunkett G. III"/>
            <person name="Rudd K.E."/>
            <person name="Serres M.H."/>
            <person name="Thomas G.H."/>
            <person name="Thomson N.R."/>
            <person name="Wishart D."/>
            <person name="Wanner B.L."/>
        </authorList>
    </citation>
    <scope>SEQUENCE REVISION TO 172-179</scope>
</reference>
<reference key="3">
    <citation type="journal article" date="2006" name="Mol. Syst. Biol.">
        <title>Highly accurate genome sequences of Escherichia coli K-12 strains MG1655 and W3110.</title>
        <authorList>
            <person name="Hayashi K."/>
            <person name="Morooka N."/>
            <person name="Yamamoto Y."/>
            <person name="Fujita K."/>
            <person name="Isono K."/>
            <person name="Choi S."/>
            <person name="Ohtsubo E."/>
            <person name="Baba T."/>
            <person name="Wanner B.L."/>
            <person name="Mori H."/>
            <person name="Horiuchi T."/>
        </authorList>
    </citation>
    <scope>NUCLEOTIDE SEQUENCE [LARGE SCALE GENOMIC DNA]</scope>
    <source>
        <strain>K12 / W3110 / ATCC 27325 / DSM 5911</strain>
    </source>
</reference>
<reference key="4">
    <citation type="journal article" date="1990" name="J. Bacteriol.">
        <title>Alkaline induction of a novel gene locus, alx, in Escherichia coli.</title>
        <authorList>
            <person name="Bingham R.J."/>
            <person name="Hall K.S."/>
            <person name="Slonczewski J.L."/>
        </authorList>
    </citation>
    <scope>GENE NAME</scope>
    <scope>INDUCTION</scope>
    <source>
        <strain>K12</strain>
    </source>
</reference>
<reference key="5">
    <citation type="journal article" date="2002" name="J. Bacteriol.">
        <title>pH-dependent expression of periplasmic proteins and amino acid catabolism in Escherichia coli.</title>
        <authorList>
            <person name="Stancik L.M."/>
            <person name="Stancik D.M."/>
            <person name="Schmidt B."/>
            <person name="Barnhart D.M."/>
            <person name="Yoncheva Y.N."/>
            <person name="Slonczewski J.L."/>
        </authorList>
    </citation>
    <scope>POSSIBLE FUNCTION</scope>
    <scope>INDUCTION</scope>
    <source>
        <strain>K12</strain>
    </source>
</reference>
<reference key="6">
    <citation type="journal article" date="2005" name="Science">
        <title>Global topology analysis of the Escherichia coli inner membrane proteome.</title>
        <authorList>
            <person name="Daley D.O."/>
            <person name="Rapp M."/>
            <person name="Granseth E."/>
            <person name="Melen K."/>
            <person name="Drew D."/>
            <person name="von Heijne G."/>
        </authorList>
    </citation>
    <scope>SUBCELLULAR LOCATION</scope>
    <scope>TOPOLOGY [LARGE SCALE ANALYSIS]</scope>
    <source>
        <strain>K12 / MG1655 / ATCC 47076</strain>
    </source>
</reference>
<feature type="chain" id="PRO_0000103410" description="Putative membrane-bound redox modulator Alx">
    <location>
        <begin position="1"/>
        <end position="321"/>
    </location>
</feature>
<feature type="topological domain" description="Periplasmic" evidence="1">
    <location>
        <begin position="1"/>
        <end position="6"/>
    </location>
</feature>
<feature type="transmembrane region" description="Helical" evidence="1">
    <location>
        <begin position="7"/>
        <end position="27"/>
    </location>
</feature>
<feature type="topological domain" description="Cytoplasmic" evidence="1">
    <location>
        <begin position="28"/>
        <end position="43"/>
    </location>
</feature>
<feature type="transmembrane region" description="Helical" evidence="1">
    <location>
        <begin position="44"/>
        <end position="64"/>
    </location>
</feature>
<feature type="topological domain" description="Periplasmic" evidence="1">
    <location>
        <begin position="65"/>
        <end position="89"/>
    </location>
</feature>
<feature type="transmembrane region" description="Helical" evidence="1">
    <location>
        <begin position="90"/>
        <end position="110"/>
    </location>
</feature>
<feature type="topological domain" description="Cytoplasmic" evidence="1">
    <location>
        <begin position="111"/>
        <end position="113"/>
    </location>
</feature>
<feature type="transmembrane region" description="Helical" evidence="1">
    <location>
        <begin position="114"/>
        <end position="134"/>
    </location>
</feature>
<feature type="topological domain" description="Periplasmic" evidence="1">
    <location>
        <position position="135"/>
    </location>
</feature>
<feature type="transmembrane region" description="Helical" evidence="1">
    <location>
        <begin position="136"/>
        <end position="156"/>
    </location>
</feature>
<feature type="topological domain" description="Cytoplasmic" evidence="1">
    <location>
        <begin position="157"/>
        <end position="198"/>
    </location>
</feature>
<feature type="transmembrane region" description="Helical" evidence="1">
    <location>
        <begin position="199"/>
        <end position="219"/>
    </location>
</feature>
<feature type="topological domain" description="Periplasmic" evidence="1">
    <location>
        <begin position="220"/>
        <end position="225"/>
    </location>
</feature>
<feature type="transmembrane region" description="Helical" evidence="1">
    <location>
        <begin position="226"/>
        <end position="246"/>
    </location>
</feature>
<feature type="topological domain" description="Cytoplasmic" evidence="1">
    <location>
        <begin position="247"/>
        <end position="261"/>
    </location>
</feature>
<feature type="transmembrane region" description="Helical" evidence="1">
    <location>
        <begin position="262"/>
        <end position="282"/>
    </location>
</feature>
<feature type="topological domain" description="Periplasmic" evidence="1">
    <location>
        <begin position="283"/>
        <end position="286"/>
    </location>
</feature>
<feature type="transmembrane region" description="Helical" evidence="1">
    <location>
        <begin position="287"/>
        <end position="307"/>
    </location>
</feature>
<feature type="topological domain" description="Cytoplasmic" evidence="1 3">
    <location>
        <begin position="308"/>
        <end position="321"/>
    </location>
</feature>
<feature type="sequence conflict" description="In Ref. 1; AAA57890." evidence="6" ref="1">
    <original>PLVRWLRG</original>
    <variation>RWCAGYAV</variation>
    <location>
        <begin position="172"/>
        <end position="179"/>
    </location>
</feature>
<sequence>MNTVGTPLLWGGFAVVVAIMLAIDLLLQGRRGAHAMTMKQAAAWSLVWVTLSLLFNAAFWWYLVQTEGRAVADPQALAFLTGYLIEKSLAVDNVFVWLMLFSYFSVPAALQRRVLVYGVLGAIVLRTIMIFTGSWLISQFDWILYIFGAFLLFTGVKMALAHEDESGIGDKPLVRWLRGHLRMTDTIDNEHFFVRKNGLLYATPLMLVLILVELSDVIFAVDSIPAIFAVTTDPFIVLTSNLFAILGLRAMYFLLAGVAERFSMLKYGLAVILVFIGIKMLIVDFYHIPIAVSLGVVFGILVMTFIINAWVNYRHDKQRGG</sequence>
<proteinExistence type="evidence at protein level"/>